<name>SED4_YEAST</name>
<gene>
    <name type="primary">SED4</name>
    <name type="ordered locus">YCR067C</name>
    <name type="ORF">YCR67C</name>
    <name type="ORF">YCR901</name>
</gene>
<feature type="chain" id="PRO_0000051211" description="Putative guanine nucleotide-exchange factor SED4">
    <location>
        <begin position="1"/>
        <end position="1065"/>
    </location>
</feature>
<feature type="topological domain" description="Cytoplasmic" evidence="1">
    <location>
        <begin position="1"/>
        <end position="346"/>
    </location>
</feature>
<feature type="transmembrane region" description="Helical; Signal-anchor for type II membrane protein">
    <location>
        <begin position="347"/>
        <end position="365"/>
    </location>
</feature>
<feature type="topological domain" description="Lumenal" evidence="1">
    <location>
        <begin position="366"/>
        <end position="1065"/>
    </location>
</feature>
<feature type="repeat" description="WD 1">
    <location>
        <begin position="259"/>
        <end position="298"/>
    </location>
</feature>
<feature type="repeat" description="WD 2">
    <location>
        <begin position="302"/>
        <end position="341"/>
    </location>
</feature>
<feature type="repeat" description="1">
    <location>
        <begin position="824"/>
        <end position="833"/>
    </location>
</feature>
<feature type="repeat" description="2">
    <location>
        <begin position="834"/>
        <end position="843"/>
    </location>
</feature>
<feature type="repeat" description="3">
    <location>
        <begin position="844"/>
        <end position="853"/>
    </location>
</feature>
<feature type="repeat" description="4">
    <location>
        <begin position="854"/>
        <end position="863"/>
    </location>
</feature>
<feature type="region of interest" description="Disordered" evidence="3">
    <location>
        <begin position="458"/>
        <end position="477"/>
    </location>
</feature>
<feature type="region of interest" description="Disordered" evidence="3">
    <location>
        <begin position="482"/>
        <end position="520"/>
    </location>
</feature>
<feature type="region of interest" description="Disordered" evidence="3">
    <location>
        <begin position="551"/>
        <end position="625"/>
    </location>
</feature>
<feature type="region of interest" description="4 X 10 AA tandem repeats">
    <location>
        <begin position="824"/>
        <end position="863"/>
    </location>
</feature>
<feature type="short sequence motif" description="Prevents secretion from ER" evidence="2">
    <location>
        <begin position="1062"/>
        <end position="1065"/>
    </location>
</feature>
<feature type="compositionally biased region" description="Low complexity" evidence="3">
    <location>
        <begin position="465"/>
        <end position="476"/>
    </location>
</feature>
<feature type="compositionally biased region" description="Polar residues" evidence="3">
    <location>
        <begin position="482"/>
        <end position="495"/>
    </location>
</feature>
<feature type="compositionally biased region" description="Low complexity" evidence="3">
    <location>
        <begin position="568"/>
        <end position="621"/>
    </location>
</feature>
<feature type="modified residue" description="Phosphoserine" evidence="8">
    <location>
        <position position="65"/>
    </location>
</feature>
<feature type="glycosylation site" description="N-linked (GlcNAc...) asparagine" evidence="1">
    <location>
        <position position="388"/>
    </location>
</feature>
<feature type="glycosylation site" description="N-linked (GlcNAc...) asparagine" evidence="1">
    <location>
        <position position="620"/>
    </location>
</feature>
<feature type="glycosylation site" description="N-linked (GlcNAc...) asparagine" evidence="1">
    <location>
        <position position="1039"/>
    </location>
</feature>
<organism>
    <name type="scientific">Saccharomyces cerevisiae (strain ATCC 204508 / S288c)</name>
    <name type="common">Baker's yeast</name>
    <dbReference type="NCBI Taxonomy" id="559292"/>
    <lineage>
        <taxon>Eukaryota</taxon>
        <taxon>Fungi</taxon>
        <taxon>Dikarya</taxon>
        <taxon>Ascomycota</taxon>
        <taxon>Saccharomycotina</taxon>
        <taxon>Saccharomycetes</taxon>
        <taxon>Saccharomycetales</taxon>
        <taxon>Saccharomycetaceae</taxon>
        <taxon>Saccharomyces</taxon>
    </lineage>
</organism>
<accession>P25365</accession>
<accession>D6VR70</accession>
<evidence type="ECO:0000255" key="1"/>
<evidence type="ECO:0000255" key="2">
    <source>
        <dbReference type="PROSITE-ProRule" id="PRU10138"/>
    </source>
</evidence>
<evidence type="ECO:0000256" key="3">
    <source>
        <dbReference type="SAM" id="MobiDB-lite"/>
    </source>
</evidence>
<evidence type="ECO:0000269" key="4">
    <source>
    </source>
</evidence>
<evidence type="ECO:0000269" key="5">
    <source>
    </source>
</evidence>
<evidence type="ECO:0000269" key="6">
    <source>
    </source>
</evidence>
<evidence type="ECO:0000305" key="7"/>
<evidence type="ECO:0007744" key="8">
    <source>
    </source>
</evidence>
<comment type="function">
    <text evidence="4 5 6">Putative guanine nucleotide-exchange factor (GEF) involved in the formation or budding of transport vesicles from the ER. Positive regulator of SAR1 probably through inhibition of the GTPase activation by SEC23.</text>
</comment>
<comment type="subcellular location">
    <subcellularLocation>
        <location>Endoplasmic reticulum membrane</location>
        <topology>Single-pass type II membrane protein</topology>
    </subcellularLocation>
    <subcellularLocation>
        <location evidence="7">Golgi apparatus membrane</location>
        <topology evidence="7">Single-pass type II membrane protein</topology>
    </subcellularLocation>
    <text>In the process of transport, SED4 itself may migrate to the Golgi apparatus and function in subsequent transport events.</text>
</comment>
<comment type="similarity">
    <text evidence="7">Belongs to the WD repeat SEC12 family.</text>
</comment>
<reference key="1">
    <citation type="journal article" date="1992" name="EMBO J.">
        <title>Genes that allow yeast cells to grow in the absence of the HDEL receptor.</title>
        <authorList>
            <person name="Hardwick K.G."/>
            <person name="Boothroyd J.C."/>
            <person name="Rudner A.D."/>
            <person name="Pelham H.R.B."/>
        </authorList>
    </citation>
    <scope>NUCLEOTIDE SEQUENCE [GENOMIC DNA]</scope>
    <scope>CHARACTERIZATION</scope>
</reference>
<reference key="2">
    <citation type="journal article" date="1992" name="Nature">
        <title>The complete DNA sequence of yeast chromosome III.</title>
        <authorList>
            <person name="Oliver S.G."/>
            <person name="van der Aart Q.J.M."/>
            <person name="Agostoni-Carbone M.L."/>
            <person name="Aigle M."/>
            <person name="Alberghina L."/>
            <person name="Alexandraki D."/>
            <person name="Antoine G."/>
            <person name="Anwar R."/>
            <person name="Ballesta J.P.G."/>
            <person name="Benit P."/>
            <person name="Berben G."/>
            <person name="Bergantino E."/>
            <person name="Biteau N."/>
            <person name="Bolle P.-A."/>
            <person name="Bolotin-Fukuhara M."/>
            <person name="Brown A."/>
            <person name="Brown A.J.P."/>
            <person name="Buhler J.-M."/>
            <person name="Carcano C."/>
            <person name="Carignani G."/>
            <person name="Cederberg H."/>
            <person name="Chanet R."/>
            <person name="Contreras R."/>
            <person name="Crouzet M."/>
            <person name="Daignan-Fornier B."/>
            <person name="Defoor E."/>
            <person name="Delgado M.D."/>
            <person name="Demolder J."/>
            <person name="Doira C."/>
            <person name="Dubois E."/>
            <person name="Dujon B."/>
            <person name="Duesterhoeft A."/>
            <person name="Erdmann D."/>
            <person name="Esteban M."/>
            <person name="Fabre F."/>
            <person name="Fairhead C."/>
            <person name="Faye G."/>
            <person name="Feldmann H."/>
            <person name="Fiers W."/>
            <person name="Francingues-Gaillard M.-C."/>
            <person name="Franco L."/>
            <person name="Frontali L."/>
            <person name="Fukuhara H."/>
            <person name="Fuller L.J."/>
            <person name="Galland P."/>
            <person name="Gent M.E."/>
            <person name="Gigot D."/>
            <person name="Gilliquet V."/>
            <person name="Glansdorff N."/>
            <person name="Goffeau A."/>
            <person name="Grenson M."/>
            <person name="Grisanti P."/>
            <person name="Grivell L.A."/>
            <person name="de Haan M."/>
            <person name="Haasemann M."/>
            <person name="Hatat D."/>
            <person name="Hoenicka J."/>
            <person name="Hegemann J.H."/>
            <person name="Herbert C.J."/>
            <person name="Hilger F."/>
            <person name="Hohmann S."/>
            <person name="Hollenberg C.P."/>
            <person name="Huse K."/>
            <person name="Iborra F."/>
            <person name="Indge K.J."/>
            <person name="Isono K."/>
            <person name="Jacq C."/>
            <person name="Jacquet M."/>
            <person name="James C.M."/>
            <person name="Jauniaux J.-C."/>
            <person name="Jia Y."/>
            <person name="Jimenez A."/>
            <person name="Kelly A."/>
            <person name="Kleinhans U."/>
            <person name="Kreisl P."/>
            <person name="Lanfranchi G."/>
            <person name="Lewis C."/>
            <person name="van der Linden C.G."/>
            <person name="Lucchini G."/>
            <person name="Lutzenkirchen K."/>
            <person name="Maat M.J."/>
            <person name="Mallet L."/>
            <person name="Mannhaupt G."/>
            <person name="Martegani E."/>
            <person name="Mathieu A."/>
            <person name="Maurer C.T.C."/>
            <person name="McConnell D."/>
            <person name="McKee R.A."/>
            <person name="Messenguy F."/>
            <person name="Mewes H.-W."/>
            <person name="Molemans F."/>
            <person name="Montague M.A."/>
            <person name="Muzi Falconi M."/>
            <person name="Navas L."/>
            <person name="Newlon C.S."/>
            <person name="Noone D."/>
            <person name="Pallier C."/>
            <person name="Panzeri L."/>
            <person name="Pearson B.M."/>
            <person name="Perea J."/>
            <person name="Philippsen P."/>
            <person name="Pierard A."/>
            <person name="Planta R.J."/>
            <person name="Plevani P."/>
            <person name="Poetsch B."/>
            <person name="Pohl F.M."/>
            <person name="Purnelle B."/>
            <person name="Ramezani Rad M."/>
            <person name="Rasmussen S.W."/>
            <person name="Raynal A."/>
            <person name="Remacha M.A."/>
            <person name="Richterich P."/>
            <person name="Roberts A.B."/>
            <person name="Rodriguez F."/>
            <person name="Sanz E."/>
            <person name="Schaaff-Gerstenschlaeger I."/>
            <person name="Scherens B."/>
            <person name="Schweitzer B."/>
            <person name="Shu Y."/>
            <person name="Skala J."/>
            <person name="Slonimski P.P."/>
            <person name="Sor F."/>
            <person name="Soustelle C."/>
            <person name="Spiegelberg R."/>
            <person name="Stateva L.I."/>
            <person name="Steensma H.Y."/>
            <person name="Steiner S."/>
            <person name="Thierry A."/>
            <person name="Thireos G."/>
            <person name="Tzermia M."/>
            <person name="Urrestarazu L.A."/>
            <person name="Valle G."/>
            <person name="Vetter I."/>
            <person name="van Vliet-Reedijk J.C."/>
            <person name="Voet M."/>
            <person name="Volckaert G."/>
            <person name="Vreken P."/>
            <person name="Wang H."/>
            <person name="Warmington J.R."/>
            <person name="von Wettstein D."/>
            <person name="Wicksteed B.L."/>
            <person name="Wilson C."/>
            <person name="Wurst H."/>
            <person name="Xu G."/>
            <person name="Yoshikawa A."/>
            <person name="Zimmermann F.K."/>
            <person name="Sgouros J.G."/>
        </authorList>
    </citation>
    <scope>NUCLEOTIDE SEQUENCE [LARGE SCALE GENOMIC DNA]</scope>
    <source>
        <strain>ATCC 204508 / S288c</strain>
    </source>
</reference>
<reference key="3">
    <citation type="journal article" date="2014" name="G3 (Bethesda)">
        <title>The reference genome sequence of Saccharomyces cerevisiae: Then and now.</title>
        <authorList>
            <person name="Engel S.R."/>
            <person name="Dietrich F.S."/>
            <person name="Fisk D.G."/>
            <person name="Binkley G."/>
            <person name="Balakrishnan R."/>
            <person name="Costanzo M.C."/>
            <person name="Dwight S.S."/>
            <person name="Hitz B.C."/>
            <person name="Karra K."/>
            <person name="Nash R.S."/>
            <person name="Weng S."/>
            <person name="Wong E.D."/>
            <person name="Lloyd P."/>
            <person name="Skrzypek M.S."/>
            <person name="Miyasato S.R."/>
            <person name="Simison M."/>
            <person name="Cherry J.M."/>
        </authorList>
    </citation>
    <scope>GENOME REANNOTATION</scope>
    <source>
        <strain>ATCC 204508 / S288c</strain>
    </source>
</reference>
<reference key="4">
    <citation type="journal article" date="2007" name="Genome Res.">
        <title>Approaching a complete repository of sequence-verified protein-encoding clones for Saccharomyces cerevisiae.</title>
        <authorList>
            <person name="Hu Y."/>
            <person name="Rolfs A."/>
            <person name="Bhullar B."/>
            <person name="Murthy T.V.S."/>
            <person name="Zhu C."/>
            <person name="Berger M.F."/>
            <person name="Camargo A.A."/>
            <person name="Kelley F."/>
            <person name="McCarron S."/>
            <person name="Jepson D."/>
            <person name="Richardson A."/>
            <person name="Raphael J."/>
            <person name="Moreira D."/>
            <person name="Taycher E."/>
            <person name="Zuo D."/>
            <person name="Mohr S."/>
            <person name="Kane M.F."/>
            <person name="Williamson J."/>
            <person name="Simpson A.J.G."/>
            <person name="Bulyk M.L."/>
            <person name="Harlow E."/>
            <person name="Marsischky G."/>
            <person name="Kolodner R.D."/>
            <person name="LaBaer J."/>
        </authorList>
    </citation>
    <scope>NUCLEOTIDE SEQUENCE [GENOMIC DNA]</scope>
    <source>
        <strain>ATCC 204508 / S288c</strain>
    </source>
</reference>
<reference key="5">
    <citation type="journal article" date="1992" name="Yeast">
        <title>Sequence of the sup61-RAD18 region on chromosome III of Saccharomyces cerevisiae.</title>
        <authorList>
            <person name="Benit P."/>
            <person name="Chanet R."/>
            <person name="Fabre F."/>
            <person name="Faye G."/>
            <person name="Fukuhara H."/>
            <person name="Sor F."/>
        </authorList>
    </citation>
    <scope>NUCLEOTIDE SEQUENCE [GENOMIC DNA] OF 446-1065</scope>
</reference>
<reference key="6">
    <citation type="journal article" date="1995" name="J. Cell Biol.">
        <title>SED4 encodes a yeast endoplasmic reticulum protein that binds Sec16p and participates in vesicle formation.</title>
        <authorList>
            <person name="Gimeno R.E."/>
            <person name="Espenshade P.J."/>
            <person name="Kaiser C.A."/>
        </authorList>
    </citation>
    <scope>FUNCTION</scope>
    <scope>SUBCELLULAR LOCATION</scope>
    <scope>GLYCOSYLATION</scope>
    <scope>INTERACTION WITH SEC16</scope>
</reference>
<reference key="7">
    <citation type="journal article" date="1999" name="J. Biochem.">
        <title>Identification of SEC12, SED4, truncated SEC16, and EKS1/HRD3 as multicopy suppressors of ts mutants of Sar1 GTPase.</title>
        <authorList>
            <person name="Saito Y."/>
            <person name="Yamanushi T."/>
            <person name="Oka T."/>
            <person name="Nakano A."/>
        </authorList>
    </citation>
    <scope>FUNCTION</scope>
</reference>
<reference key="8">
    <citation type="journal article" date="2000" name="Genes Cells">
        <title>Sed4p functions as a positive regulator of Sar1p probably through inhibition of the GTPase activation by Sec23p.</title>
        <authorList>
            <person name="Saito-Nakano Y."/>
            <person name="Nakano A."/>
        </authorList>
    </citation>
    <scope>FUNCTION</scope>
</reference>
<reference key="9">
    <citation type="journal article" date="2003" name="Nature">
        <title>Global analysis of protein localization in budding yeast.</title>
        <authorList>
            <person name="Huh W.-K."/>
            <person name="Falvo J.V."/>
            <person name="Gerke L.C."/>
            <person name="Carroll A.S."/>
            <person name="Howson R.W."/>
            <person name="Weissman J.S."/>
            <person name="O'Shea E.K."/>
        </authorList>
    </citation>
    <scope>SUBCELLULAR LOCATION [LARGE SCALE ANALYSIS]</scope>
</reference>
<reference key="10">
    <citation type="journal article" date="2008" name="Mol. Cell. Proteomics">
        <title>A multidimensional chromatography technology for in-depth phosphoproteome analysis.</title>
        <authorList>
            <person name="Albuquerque C.P."/>
            <person name="Smolka M.B."/>
            <person name="Payne S.H."/>
            <person name="Bafna V."/>
            <person name="Eng J."/>
            <person name="Zhou H."/>
        </authorList>
    </citation>
    <scope>PHOSPHORYLATION [LARGE SCALE ANALYSIS] AT SER-65</scope>
    <scope>IDENTIFICATION BY MASS SPECTROMETRY [LARGE SCALE ANALYSIS]</scope>
</reference>
<sequence length="1065" mass="114079">MSGNSANYDVGYPIYGAKFINEGTLLVAGGGGQFNSSFPNKITALKVNFQKKKHIRRFREITLDSIDDAPTSLDCNNNLILVGCNELFNDSSMENVNHHLRKFVFEQEHLKFVASIDFNRTTDPSVFTKFVYINQRATVAAIASSEVPTVIRIIDPRNLTENYEIETGREVNDLHFAPNGILLSYITSNSLEVASVRDGNFVARKTDFDKNLVLSNIRFLNDNTLLVAASLSNSDGVSLLKLGVSSKGVKILKTASFMFDLNGITSMDVSPNKKFVALSSNDNLVAIVSVEKLKLVQLVPRVHESTITKVTFSPDSRYLASTSMGNTINVLKLSGTSSSILRNIWKFFLNFVLLVVLAGAIQLGYKHNVHGFIYKHAHDIYKSKFKENTTIDQGSSSYFTINDDYRGITESADIISATDVASDIETEFSSFDTSTMRTTTEDEQKFVWISSSADSQFTSADIPTSASSSSSSSSSSFYEESVTNEPIVSSPTSEITKPLASPTEPNIVEKPSLPLNSESIDLLSSSSNSITEYPEPTPDLEEKLSSLIVEQSESEITTDRESVSKLLSTESPSLSHMPSSSSSSLSLSSSLTTSPTTALSTSTATAVTTTQTNPTNDAANTSFLDNSKPASTREIYKTKIITEVITKIEYRNIPASDSNAEAEQYVTTSSSMLLTPTDTMVSSPVSEIDPIASELERMVETPTHSISIASEFDSVASNLIPNEEILSTSASQDSISSHPSTFSDSSITSGFQSIEVSTVTSSVLASESIPSISDSTFSKFHSISEPVSSAIVETATSSFSKTETKTSRVIAFSTEDSERSSALIDNSEYTSVLADNLEPTSVLADNSEPTSVLADSSEPTSVFTDAVQSPKTSVGQSSLSESTNIEGTSMASMIFSSSGASIGALSDIGKGTLSVESASSTVAQPMPGVTTTAPSFVSSPHKISASSIDASGFVQKEIMIEVQSSKDSSEAFGVRHKISENVNTPVSRMLTTEMQASGTVDVTEDVSLSSEVISALNVEITSLPNPVAPPQTIAAPLNNNSNTNIVNDDNAVAGTVNYAGLHDEL</sequence>
<dbReference type="EMBL" id="X59720">
    <property type="protein sequence ID" value="CAA42273.1"/>
    <property type="molecule type" value="Genomic_DNA"/>
</dbReference>
<dbReference type="EMBL" id="AY693176">
    <property type="protein sequence ID" value="AAT93195.1"/>
    <property type="molecule type" value="Genomic_DNA"/>
</dbReference>
<dbReference type="EMBL" id="BK006937">
    <property type="protein sequence ID" value="DAA07539.1"/>
    <property type="molecule type" value="Genomic_DNA"/>
</dbReference>
<dbReference type="PIR" id="S19482">
    <property type="entry name" value="S19482"/>
</dbReference>
<dbReference type="RefSeq" id="NP_009993.1">
    <property type="nucleotide sequence ID" value="NM_001178778.1"/>
</dbReference>
<dbReference type="SMR" id="P25365"/>
<dbReference type="BioGRID" id="31043">
    <property type="interactions" value="116"/>
</dbReference>
<dbReference type="DIP" id="DIP-1173N"/>
<dbReference type="FunCoup" id="P25365">
    <property type="interactions" value="284"/>
</dbReference>
<dbReference type="IntAct" id="P25365">
    <property type="interactions" value="5"/>
</dbReference>
<dbReference type="MINT" id="P25365"/>
<dbReference type="STRING" id="4932.YCR067C"/>
<dbReference type="GlyCosmos" id="P25365">
    <property type="glycosylation" value="3 sites, No reported glycans"/>
</dbReference>
<dbReference type="GlyGen" id="P25365">
    <property type="glycosylation" value="4 sites"/>
</dbReference>
<dbReference type="iPTMnet" id="P25365"/>
<dbReference type="PaxDb" id="4932-YCR067C"/>
<dbReference type="PeptideAtlas" id="P25365"/>
<dbReference type="EnsemblFungi" id="YCR067C_mRNA">
    <property type="protein sequence ID" value="YCR067C"/>
    <property type="gene ID" value="YCR067C"/>
</dbReference>
<dbReference type="GeneID" id="850431"/>
<dbReference type="KEGG" id="sce:YCR067C"/>
<dbReference type="AGR" id="SGD:S000000663"/>
<dbReference type="SGD" id="S000000663">
    <property type="gene designation" value="SED4"/>
</dbReference>
<dbReference type="VEuPathDB" id="FungiDB:YCR067C"/>
<dbReference type="eggNOG" id="KOG0771">
    <property type="taxonomic scope" value="Eukaryota"/>
</dbReference>
<dbReference type="GeneTree" id="ENSGT00390000000916"/>
<dbReference type="HOGENOM" id="CLU_301307_0_0_1"/>
<dbReference type="InParanoid" id="P25365"/>
<dbReference type="OMA" id="RTIWIDG"/>
<dbReference type="OrthoDB" id="2013972at2759"/>
<dbReference type="BioCyc" id="YEAST:G3O-29370-MONOMER"/>
<dbReference type="BioGRID-ORCS" id="850431">
    <property type="hits" value="0 hits in 10 CRISPR screens"/>
</dbReference>
<dbReference type="PRO" id="PR:P25365"/>
<dbReference type="Proteomes" id="UP000002311">
    <property type="component" value="Chromosome III"/>
</dbReference>
<dbReference type="RNAct" id="P25365">
    <property type="molecule type" value="protein"/>
</dbReference>
<dbReference type="GO" id="GO:0005737">
    <property type="term" value="C:cytoplasm"/>
    <property type="evidence" value="ECO:0007005"/>
    <property type="project" value="SGD"/>
</dbReference>
<dbReference type="GO" id="GO:0005789">
    <property type="term" value="C:endoplasmic reticulum membrane"/>
    <property type="evidence" value="ECO:0000314"/>
    <property type="project" value="SGD"/>
</dbReference>
<dbReference type="GO" id="GO:0000139">
    <property type="term" value="C:Golgi membrane"/>
    <property type="evidence" value="ECO:0007669"/>
    <property type="project" value="UniProtKB-SubCell"/>
</dbReference>
<dbReference type="GO" id="GO:0005096">
    <property type="term" value="F:GTPase activator activity"/>
    <property type="evidence" value="ECO:0000314"/>
    <property type="project" value="SGD"/>
</dbReference>
<dbReference type="GO" id="GO:0005085">
    <property type="term" value="F:guanyl-nucleotide exchange factor activity"/>
    <property type="evidence" value="ECO:0007669"/>
    <property type="project" value="InterPro"/>
</dbReference>
<dbReference type="GO" id="GO:0006888">
    <property type="term" value="P:endoplasmic reticulum to Golgi vesicle-mediated transport"/>
    <property type="evidence" value="ECO:0000318"/>
    <property type="project" value="GO_Central"/>
</dbReference>
<dbReference type="GO" id="GO:0015031">
    <property type="term" value="P:protein transport"/>
    <property type="evidence" value="ECO:0007669"/>
    <property type="project" value="UniProtKB-KW"/>
</dbReference>
<dbReference type="GO" id="GO:0003400">
    <property type="term" value="P:regulation of COPII vesicle coating"/>
    <property type="evidence" value="ECO:0000314"/>
    <property type="project" value="SGD"/>
</dbReference>
<dbReference type="FunFam" id="2.130.10.10:FF:000597">
    <property type="entry name" value="Guanine nucleotide-exchange factor SEC12"/>
    <property type="match status" value="1"/>
</dbReference>
<dbReference type="Gene3D" id="2.130.10.10">
    <property type="entry name" value="YVTN repeat-like/Quinoprotein amine dehydrogenase"/>
    <property type="match status" value="1"/>
</dbReference>
<dbReference type="InterPro" id="IPR045260">
    <property type="entry name" value="Sec12-like"/>
</dbReference>
<dbReference type="InterPro" id="IPR015943">
    <property type="entry name" value="WD40/YVTN_repeat-like_dom_sf"/>
</dbReference>
<dbReference type="InterPro" id="IPR036322">
    <property type="entry name" value="WD40_repeat_dom_sf"/>
</dbReference>
<dbReference type="InterPro" id="IPR001680">
    <property type="entry name" value="WD40_rpt"/>
</dbReference>
<dbReference type="PANTHER" id="PTHR23284">
    <property type="entry name" value="PROLACTIN REGULATORY ELEMENT BINDING PROTEIN"/>
    <property type="match status" value="1"/>
</dbReference>
<dbReference type="PANTHER" id="PTHR23284:SF0">
    <property type="entry name" value="PROLACTIN REGULATORY ELEMENT-BINDING PROTEIN"/>
    <property type="match status" value="1"/>
</dbReference>
<dbReference type="Pfam" id="PF00400">
    <property type="entry name" value="WD40"/>
    <property type="match status" value="1"/>
</dbReference>
<dbReference type="SMART" id="SM00320">
    <property type="entry name" value="WD40"/>
    <property type="match status" value="2"/>
</dbReference>
<dbReference type="SUPFAM" id="SSF50978">
    <property type="entry name" value="WD40 repeat-like"/>
    <property type="match status" value="1"/>
</dbReference>
<dbReference type="PROSITE" id="PS00014">
    <property type="entry name" value="ER_TARGET"/>
    <property type="match status" value="1"/>
</dbReference>
<dbReference type="PROSITE" id="PS50294">
    <property type="entry name" value="WD_REPEATS_REGION"/>
    <property type="match status" value="1"/>
</dbReference>
<keyword id="KW-0256">Endoplasmic reticulum</keyword>
<keyword id="KW-0931">ER-Golgi transport</keyword>
<keyword id="KW-0325">Glycoprotein</keyword>
<keyword id="KW-0333">Golgi apparatus</keyword>
<keyword id="KW-0343">GTPase activation</keyword>
<keyword id="KW-0472">Membrane</keyword>
<keyword id="KW-0597">Phosphoprotein</keyword>
<keyword id="KW-0653">Protein transport</keyword>
<keyword id="KW-1185">Reference proteome</keyword>
<keyword id="KW-0677">Repeat</keyword>
<keyword id="KW-0735">Signal-anchor</keyword>
<keyword id="KW-0812">Transmembrane</keyword>
<keyword id="KW-1133">Transmembrane helix</keyword>
<keyword id="KW-0813">Transport</keyword>
<keyword id="KW-0853">WD repeat</keyword>
<proteinExistence type="evidence at protein level"/>
<protein>
    <recommendedName>
        <fullName>Putative guanine nucleotide-exchange factor SED4</fullName>
    </recommendedName>
</protein>